<feature type="chain" id="PRO_1000081296" description="Small ribosomal subunit protein uS7">
    <location>
        <begin position="1"/>
        <end position="160"/>
    </location>
</feature>
<evidence type="ECO:0000255" key="1">
    <source>
        <dbReference type="HAMAP-Rule" id="MF_00480"/>
    </source>
</evidence>
<evidence type="ECO:0000305" key="2"/>
<comment type="function">
    <text evidence="1">One of the primary rRNA binding proteins, it binds directly to 16S rRNA where it nucleates assembly of the head domain of the 30S subunit. Is located at the subunit interface close to the decoding center, probably blocks exit of the E-site tRNA.</text>
</comment>
<comment type="subunit">
    <text evidence="1">Part of the 30S ribosomal subunit. Contacts proteins S9 and S11.</text>
</comment>
<comment type="similarity">
    <text evidence="1">Belongs to the universal ribosomal protein uS7 family.</text>
</comment>
<accession>B0BWA1</accession>
<organism>
    <name type="scientific">Rickettsia rickettsii (strain Iowa)</name>
    <dbReference type="NCBI Taxonomy" id="452659"/>
    <lineage>
        <taxon>Bacteria</taxon>
        <taxon>Pseudomonadati</taxon>
        <taxon>Pseudomonadota</taxon>
        <taxon>Alphaproteobacteria</taxon>
        <taxon>Rickettsiales</taxon>
        <taxon>Rickettsiaceae</taxon>
        <taxon>Rickettsieae</taxon>
        <taxon>Rickettsia</taxon>
        <taxon>spotted fever group</taxon>
    </lineage>
</organism>
<reference key="1">
    <citation type="journal article" date="2008" name="Infect. Immun.">
        <title>Genomic comparison of virulent Rickettsia rickettsii Sheila Smith and avirulent Rickettsia rickettsii Iowa.</title>
        <authorList>
            <person name="Ellison D.W."/>
            <person name="Clark T.R."/>
            <person name="Sturdevant D.E."/>
            <person name="Virtaneva K."/>
            <person name="Porcella S.F."/>
            <person name="Hackstadt T."/>
        </authorList>
    </citation>
    <scope>NUCLEOTIDE SEQUENCE [LARGE SCALE GENOMIC DNA]</scope>
    <source>
        <strain>Iowa</strain>
    </source>
</reference>
<keyword id="KW-0687">Ribonucleoprotein</keyword>
<keyword id="KW-0689">Ribosomal protein</keyword>
<keyword id="KW-0694">RNA-binding</keyword>
<keyword id="KW-0699">rRNA-binding</keyword>
<keyword id="KW-0820">tRNA-binding</keyword>
<protein>
    <recommendedName>
        <fullName evidence="1">Small ribosomal subunit protein uS7</fullName>
    </recommendedName>
    <alternativeName>
        <fullName evidence="2">30S ribosomal protein S7</fullName>
    </alternativeName>
</protein>
<name>RS7_RICRO</name>
<proteinExistence type="inferred from homology"/>
<sequence length="160" mass="18412">MSRRHAAEKRVILPDMKYNSILLSRFINNIMKEGKKALAEKIVYSAFNKIEKKHRVDPYQAFNNAMHNVKPHLEVTSVRVGGANYQVPTHVDERRGYALASRWIINAASKRSEKMMIDKLAEELFEASNNRGVAIKKKEDTHKMAEANKAFSHFSPKKMK</sequence>
<gene>
    <name evidence="1" type="primary">rpsG</name>
    <name type="ordered locus">RrIowa_0214</name>
</gene>
<dbReference type="EMBL" id="CP000766">
    <property type="protein sequence ID" value="ABY72127.1"/>
    <property type="molecule type" value="Genomic_DNA"/>
</dbReference>
<dbReference type="RefSeq" id="WP_012150390.1">
    <property type="nucleotide sequence ID" value="NC_010263.3"/>
</dbReference>
<dbReference type="SMR" id="B0BWA1"/>
<dbReference type="GeneID" id="79936965"/>
<dbReference type="KEGG" id="rrj:RrIowa_0214"/>
<dbReference type="eggNOG" id="COG0049">
    <property type="taxonomic scope" value="Bacteria"/>
</dbReference>
<dbReference type="HOGENOM" id="CLU_072226_1_1_5"/>
<dbReference type="Proteomes" id="UP000000796">
    <property type="component" value="Chromosome"/>
</dbReference>
<dbReference type="GO" id="GO:0015935">
    <property type="term" value="C:small ribosomal subunit"/>
    <property type="evidence" value="ECO:0007669"/>
    <property type="project" value="InterPro"/>
</dbReference>
<dbReference type="GO" id="GO:0019843">
    <property type="term" value="F:rRNA binding"/>
    <property type="evidence" value="ECO:0007669"/>
    <property type="project" value="UniProtKB-UniRule"/>
</dbReference>
<dbReference type="GO" id="GO:0003735">
    <property type="term" value="F:structural constituent of ribosome"/>
    <property type="evidence" value="ECO:0007669"/>
    <property type="project" value="InterPro"/>
</dbReference>
<dbReference type="GO" id="GO:0000049">
    <property type="term" value="F:tRNA binding"/>
    <property type="evidence" value="ECO:0007669"/>
    <property type="project" value="UniProtKB-UniRule"/>
</dbReference>
<dbReference type="GO" id="GO:0006412">
    <property type="term" value="P:translation"/>
    <property type="evidence" value="ECO:0007669"/>
    <property type="project" value="UniProtKB-UniRule"/>
</dbReference>
<dbReference type="CDD" id="cd14869">
    <property type="entry name" value="uS7_Bacteria"/>
    <property type="match status" value="1"/>
</dbReference>
<dbReference type="FunFam" id="1.10.455.10:FF:000001">
    <property type="entry name" value="30S ribosomal protein S7"/>
    <property type="match status" value="1"/>
</dbReference>
<dbReference type="Gene3D" id="1.10.455.10">
    <property type="entry name" value="Ribosomal protein S7 domain"/>
    <property type="match status" value="1"/>
</dbReference>
<dbReference type="HAMAP" id="MF_00480_B">
    <property type="entry name" value="Ribosomal_uS7_B"/>
    <property type="match status" value="1"/>
</dbReference>
<dbReference type="InterPro" id="IPR000235">
    <property type="entry name" value="Ribosomal_uS7"/>
</dbReference>
<dbReference type="InterPro" id="IPR005717">
    <property type="entry name" value="Ribosomal_uS7_bac/org-type"/>
</dbReference>
<dbReference type="InterPro" id="IPR020606">
    <property type="entry name" value="Ribosomal_uS7_CS"/>
</dbReference>
<dbReference type="InterPro" id="IPR023798">
    <property type="entry name" value="Ribosomal_uS7_dom"/>
</dbReference>
<dbReference type="InterPro" id="IPR036823">
    <property type="entry name" value="Ribosomal_uS7_dom_sf"/>
</dbReference>
<dbReference type="NCBIfam" id="TIGR01029">
    <property type="entry name" value="rpsG_bact"/>
    <property type="match status" value="1"/>
</dbReference>
<dbReference type="PANTHER" id="PTHR11205">
    <property type="entry name" value="RIBOSOMAL PROTEIN S7"/>
    <property type="match status" value="1"/>
</dbReference>
<dbReference type="Pfam" id="PF00177">
    <property type="entry name" value="Ribosomal_S7"/>
    <property type="match status" value="1"/>
</dbReference>
<dbReference type="PIRSF" id="PIRSF002122">
    <property type="entry name" value="RPS7p_RPS7a_RPS5e_RPS7o"/>
    <property type="match status" value="1"/>
</dbReference>
<dbReference type="SUPFAM" id="SSF47973">
    <property type="entry name" value="Ribosomal protein S7"/>
    <property type="match status" value="1"/>
</dbReference>
<dbReference type="PROSITE" id="PS00052">
    <property type="entry name" value="RIBOSOMAL_S7"/>
    <property type="match status" value="1"/>
</dbReference>